<keyword id="KW-1015">Disulfide bond</keyword>
<keyword id="KW-0245">EGF-like domain</keyword>
<keyword id="KW-0472">Membrane</keyword>
<keyword id="KW-1185">Reference proteome</keyword>
<keyword id="KW-0812">Transmembrane</keyword>
<keyword id="KW-1133">Transmembrane helix</keyword>
<organism>
    <name type="scientific">Rattus norvegicus</name>
    <name type="common">Rat</name>
    <dbReference type="NCBI Taxonomy" id="10116"/>
    <lineage>
        <taxon>Eukaryota</taxon>
        <taxon>Metazoa</taxon>
        <taxon>Chordata</taxon>
        <taxon>Craniata</taxon>
        <taxon>Vertebrata</taxon>
        <taxon>Euteleostomi</taxon>
        <taxon>Mammalia</taxon>
        <taxon>Eutheria</taxon>
        <taxon>Euarchontoglires</taxon>
        <taxon>Glires</taxon>
        <taxon>Rodentia</taxon>
        <taxon>Myomorpha</taxon>
        <taxon>Muroidea</taxon>
        <taxon>Muridae</taxon>
        <taxon>Murinae</taxon>
        <taxon>Rattus</taxon>
    </lineage>
</organism>
<name>ADAM5_RAT</name>
<protein>
    <recommendedName>
        <fullName>Disintegrin and metalloproteinase domain-containing protein 5</fullName>
    </recommendedName>
    <alternativeName>
        <fullName>Transmembrane metalloproteinase-like, disintegrin-like, and cysteine-rich protein II</fullName>
        <shortName>tMDC II</shortName>
    </alternativeName>
</protein>
<reference key="1">
    <citation type="journal article" date="1997" name="Mol. Reprod. Dev.">
        <title>Rat MDC family of proteins: sequence analysis, tissue distribution, and expression in prepubertal and adult rat testis.</title>
        <authorList>
            <person name="Frayne J."/>
            <person name="Jury J.A."/>
            <person name="Barker H.L."/>
            <person name="Hall L."/>
        </authorList>
    </citation>
    <scope>NUCLEOTIDE SEQUENCE [MRNA]</scope>
    <scope>DEVELOPMENTAL STAGE</scope>
    <scope>TISSUE SPECIFICITY</scope>
</reference>
<reference key="2">
    <citation type="journal article" date="2004" name="Genome Res.">
        <title>The status, quality, and expansion of the NIH full-length cDNA project: the Mammalian Gene Collection (MGC).</title>
        <authorList>
            <consortium name="The MGC Project Team"/>
        </authorList>
    </citation>
    <scope>NUCLEOTIDE SEQUENCE [LARGE SCALE MRNA]</scope>
    <source>
        <tissue>Testis</tissue>
    </source>
</reference>
<dbReference type="EMBL" id="BC091169">
    <property type="protein sequence ID" value="AAH91169.1"/>
    <property type="molecule type" value="mRNA"/>
</dbReference>
<dbReference type="RefSeq" id="NP_064699.1">
    <property type="nucleotide sequence ID" value="NM_020303.1"/>
</dbReference>
<dbReference type="SMR" id="Q5BK84"/>
<dbReference type="FunCoup" id="Q5BK84">
    <property type="interactions" value="1"/>
</dbReference>
<dbReference type="STRING" id="10116.ENSRNOP00000055132"/>
<dbReference type="MEROPS" id="M12.953"/>
<dbReference type="PaxDb" id="10116-ENSRNOP00000055132"/>
<dbReference type="Ensembl" id="ENSRNOT00000058330.5">
    <property type="protein sequence ID" value="ENSRNOP00000055132.5"/>
    <property type="gene ID" value="ENSRNOG00000017518.8"/>
</dbReference>
<dbReference type="GeneID" id="498654"/>
<dbReference type="KEGG" id="rno:498654"/>
<dbReference type="UCSC" id="RGD:621471">
    <property type="organism name" value="rat"/>
</dbReference>
<dbReference type="AGR" id="RGD:621471"/>
<dbReference type="CTD" id="255926"/>
<dbReference type="RGD" id="621471">
    <property type="gene designation" value="Adam5"/>
</dbReference>
<dbReference type="eggNOG" id="KOG3607">
    <property type="taxonomic scope" value="Eukaryota"/>
</dbReference>
<dbReference type="GeneTree" id="ENSGT00940000162784"/>
<dbReference type="HOGENOM" id="CLU_012714_4_3_1"/>
<dbReference type="InParanoid" id="Q5BK84"/>
<dbReference type="OrthoDB" id="5951731at2759"/>
<dbReference type="PhylomeDB" id="Q5BK84"/>
<dbReference type="PRO" id="PR:Q5BK84"/>
<dbReference type="Proteomes" id="UP000002494">
    <property type="component" value="Chromosome 16"/>
</dbReference>
<dbReference type="GO" id="GO:0009986">
    <property type="term" value="C:cell surface"/>
    <property type="evidence" value="ECO:0000266"/>
    <property type="project" value="RGD"/>
</dbReference>
<dbReference type="GO" id="GO:0005886">
    <property type="term" value="C:plasma membrane"/>
    <property type="evidence" value="ECO:0000318"/>
    <property type="project" value="GO_Central"/>
</dbReference>
<dbReference type="GO" id="GO:0004222">
    <property type="term" value="F:metalloendopeptidase activity"/>
    <property type="evidence" value="ECO:0000318"/>
    <property type="project" value="GO_Central"/>
</dbReference>
<dbReference type="GO" id="GO:0007339">
    <property type="term" value="P:binding of sperm to zona pellucida"/>
    <property type="evidence" value="ECO:0000318"/>
    <property type="project" value="GO_Central"/>
</dbReference>
<dbReference type="GO" id="GO:0007155">
    <property type="term" value="P:cell adhesion"/>
    <property type="evidence" value="ECO:0000318"/>
    <property type="project" value="GO_Central"/>
</dbReference>
<dbReference type="GO" id="GO:0008584">
    <property type="term" value="P:male gonad development"/>
    <property type="evidence" value="ECO:0000270"/>
    <property type="project" value="RGD"/>
</dbReference>
<dbReference type="GO" id="GO:0006508">
    <property type="term" value="P:proteolysis"/>
    <property type="evidence" value="ECO:0000318"/>
    <property type="project" value="GO_Central"/>
</dbReference>
<dbReference type="CDD" id="cd04269">
    <property type="entry name" value="ZnMc_adamalysin_II_like"/>
    <property type="match status" value="1"/>
</dbReference>
<dbReference type="FunFam" id="4.10.70.10:FF:000001">
    <property type="entry name" value="Disintegrin and metalloproteinase domain-containing protein 22"/>
    <property type="match status" value="1"/>
</dbReference>
<dbReference type="Gene3D" id="3.40.390.10">
    <property type="entry name" value="Collagenase (Catalytic Domain)"/>
    <property type="match status" value="1"/>
</dbReference>
<dbReference type="Gene3D" id="4.10.70.10">
    <property type="entry name" value="Disintegrin domain"/>
    <property type="match status" value="1"/>
</dbReference>
<dbReference type="InterPro" id="IPR006586">
    <property type="entry name" value="ADAM_Cys-rich"/>
</dbReference>
<dbReference type="InterPro" id="IPR018358">
    <property type="entry name" value="Disintegrin_CS"/>
</dbReference>
<dbReference type="InterPro" id="IPR001762">
    <property type="entry name" value="Disintegrin_dom"/>
</dbReference>
<dbReference type="InterPro" id="IPR036436">
    <property type="entry name" value="Disintegrin_dom_sf"/>
</dbReference>
<dbReference type="InterPro" id="IPR000742">
    <property type="entry name" value="EGF-like_dom"/>
</dbReference>
<dbReference type="InterPro" id="IPR024079">
    <property type="entry name" value="MetalloPept_cat_dom_sf"/>
</dbReference>
<dbReference type="InterPro" id="IPR001590">
    <property type="entry name" value="Peptidase_M12B"/>
</dbReference>
<dbReference type="InterPro" id="IPR034027">
    <property type="entry name" value="Reprolysin_adamalysin"/>
</dbReference>
<dbReference type="PANTHER" id="PTHR11905">
    <property type="entry name" value="ADAM A DISINTEGRIN AND METALLOPROTEASE DOMAIN"/>
    <property type="match status" value="1"/>
</dbReference>
<dbReference type="PANTHER" id="PTHR11905:SF28">
    <property type="entry name" value="DISINTEGRIN AND METALLOPROTEINASE DOMAIN-CONTAINING PROTEIN 5"/>
    <property type="match status" value="1"/>
</dbReference>
<dbReference type="Pfam" id="PF08516">
    <property type="entry name" value="ADAM_CR"/>
    <property type="match status" value="1"/>
</dbReference>
<dbReference type="Pfam" id="PF00200">
    <property type="entry name" value="Disintegrin"/>
    <property type="match status" value="1"/>
</dbReference>
<dbReference type="Pfam" id="PF01421">
    <property type="entry name" value="Reprolysin"/>
    <property type="match status" value="1"/>
</dbReference>
<dbReference type="SMART" id="SM00608">
    <property type="entry name" value="ACR"/>
    <property type="match status" value="1"/>
</dbReference>
<dbReference type="SMART" id="SM00050">
    <property type="entry name" value="DISIN"/>
    <property type="match status" value="1"/>
</dbReference>
<dbReference type="SUPFAM" id="SSF57552">
    <property type="entry name" value="Blood coagulation inhibitor (disintegrin)"/>
    <property type="match status" value="1"/>
</dbReference>
<dbReference type="SUPFAM" id="SSF55486">
    <property type="entry name" value="Metalloproteases ('zincins'), catalytic domain"/>
    <property type="match status" value="1"/>
</dbReference>
<dbReference type="PROSITE" id="PS50215">
    <property type="entry name" value="ADAM_MEPRO"/>
    <property type="match status" value="1"/>
</dbReference>
<dbReference type="PROSITE" id="PS00427">
    <property type="entry name" value="DISINTEGRIN_1"/>
    <property type="match status" value="1"/>
</dbReference>
<dbReference type="PROSITE" id="PS50214">
    <property type="entry name" value="DISINTEGRIN_2"/>
    <property type="match status" value="1"/>
</dbReference>
<dbReference type="PROSITE" id="PS01186">
    <property type="entry name" value="EGF_2"/>
    <property type="match status" value="1"/>
</dbReference>
<dbReference type="PROSITE" id="PS50026">
    <property type="entry name" value="EGF_3"/>
    <property type="match status" value="1"/>
</dbReference>
<evidence type="ECO:0000250" key="1"/>
<evidence type="ECO:0000250" key="2">
    <source>
        <dbReference type="UniProtKB" id="Q3TTE0"/>
    </source>
</evidence>
<evidence type="ECO:0000255" key="3"/>
<evidence type="ECO:0000255" key="4">
    <source>
        <dbReference type="PROSITE-ProRule" id="PRU00068"/>
    </source>
</evidence>
<evidence type="ECO:0000255" key="5">
    <source>
        <dbReference type="PROSITE-ProRule" id="PRU00076"/>
    </source>
</evidence>
<evidence type="ECO:0000255" key="6">
    <source>
        <dbReference type="PROSITE-ProRule" id="PRU00276"/>
    </source>
</evidence>
<evidence type="ECO:0000256" key="7">
    <source>
        <dbReference type="SAM" id="MobiDB-lite"/>
    </source>
</evidence>
<evidence type="ECO:0000269" key="8">
    <source>
    </source>
</evidence>
<evidence type="ECO:0000305" key="9"/>
<feature type="propeptide" id="PRO_0000349302" evidence="3">
    <location>
        <begin position="1"/>
        <end position="98"/>
    </location>
</feature>
<feature type="chain" id="PRO_0000349303" description="Disintegrin and metalloproteinase domain-containing protein 5">
    <location>
        <begin position="99"/>
        <end position="709"/>
    </location>
</feature>
<feature type="topological domain" description="Extracellular" evidence="3">
    <location>
        <begin position="1"/>
        <end position="649"/>
    </location>
</feature>
<feature type="transmembrane region" description="Helical" evidence="3">
    <location>
        <begin position="650"/>
        <end position="670"/>
    </location>
</feature>
<feature type="topological domain" description="Cytoplasmic" evidence="3">
    <location>
        <begin position="671"/>
        <end position="709"/>
    </location>
</feature>
<feature type="domain" description="Peptidase M12B" evidence="6">
    <location>
        <begin position="141"/>
        <end position="334"/>
    </location>
</feature>
<feature type="domain" description="Disintegrin" evidence="4">
    <location>
        <begin position="346"/>
        <end position="434"/>
    </location>
</feature>
<feature type="domain" description="EGF-like; calcium-binding" evidence="5">
    <location>
        <begin position="581"/>
        <end position="615"/>
    </location>
</feature>
<feature type="region of interest" description="Disordered" evidence="7">
    <location>
        <begin position="690"/>
        <end position="709"/>
    </location>
</feature>
<feature type="disulfide bond" evidence="1">
    <location>
        <begin position="247"/>
        <end position="329"/>
    </location>
</feature>
<feature type="disulfide bond" evidence="1">
    <location>
        <begin position="289"/>
        <end position="314"/>
    </location>
</feature>
<feature type="disulfide bond" evidence="1">
    <location>
        <begin position="291"/>
        <end position="296"/>
    </location>
</feature>
<feature type="disulfide bond" evidence="1">
    <location>
        <begin position="406"/>
        <end position="426"/>
    </location>
</feature>
<feature type="disulfide bond" evidence="1">
    <location>
        <begin position="585"/>
        <end position="597"/>
    </location>
</feature>
<feature type="disulfide bond" evidence="1">
    <location>
        <begin position="591"/>
        <end position="603"/>
    </location>
</feature>
<feature type="disulfide bond" evidence="1">
    <location>
        <begin position="605"/>
        <end position="614"/>
    </location>
</feature>
<accession>Q5BK84</accession>
<comment type="function">
    <text evidence="1">This is a non catalytic metalloprotease-like protein. May play a role in sperm-egg fusion (By similarity).</text>
</comment>
<comment type="subunit">
    <text evidence="2">Interacts with TEX101.</text>
</comment>
<comment type="subcellular location">
    <subcellularLocation>
        <location evidence="9">Membrane</location>
        <topology evidence="9">Single-pass membrane protein</topology>
    </subcellularLocation>
</comment>
<comment type="tissue specificity">
    <text evidence="8">Detected in testis.</text>
</comment>
<comment type="developmental stage">
    <text evidence="8">Not detectable in newborns. First detected 23 days after birth. Levels increase up to 28 days after birth, and remain constant in adults.</text>
</comment>
<comment type="caution">
    <text evidence="9">Not expected to have protease activity.</text>
</comment>
<gene>
    <name type="primary">Adam5</name>
    <name type="synonym">Tmdc2</name>
</gene>
<proteinExistence type="evidence at transcript level"/>
<sequence>MKTPISSILKSNGLGIFLYRSFITSTAVSYTYDRQDVRHSQSLSSLKNCNYNGYVAGFPNSIVSLTVCSGLRGMIQFENVSYGIEPVETLSGFIHVIYENTNQQAKIPDLGENQTYSWSDELDYQFRSNMKKSGFAVLRPRYIKTDIVVDKKLFDYMGSDTRVVLQKVIQIIGFINTMFSKLKLTVLINSVEIWSKENRIDFPEAPENLLVQFLHWKHKYRPQHISYLLAFVEHPASTGALYPGNLCKPIYGAAIALYPKGLSLESYSVIVLQLLSIGIGLTYDNADSCHCTGDVCLMTPKAIYSGGVKDFSTCSLDDFKYLSTQDLECLQDLPMERQKKKPSRPRRICGNGILEMNEQCDCGTLKNCTHKKCCDPMSCRLKSKAVCGSGECCGQDCKVKPVNVLCRKSKNECDFEEYCNGNDAYCVPDTFARNGQYCDSGQAFCYSGLCMTSNNQCMNLLGKYVRGASFACYEEFNSRNDRFGNCIRKFCSFENSLCGKLVCTWPFKRLLMKDNMSAAYGQIRDDLCISLYKGGRPLKTTLSTYSDMSERDETFVKDGTICGPDMFCLETQCKETRFLVDFQQCNTSRDCNDHGVCNNFNHCHCDKGYNPPYCESVKGQFGSIDDGHKYYIDEGKSAKQQNRGIHPKQQLQLILYITLPLIMIISAVFIKQSKLSRLCGRERSEGTSCITEDSVSNTKMTTNEGSTLH</sequence>